<organism>
    <name type="scientific">Deinococcus geothermalis (strain DSM 11300 / CIP 105573 / AG-3a)</name>
    <dbReference type="NCBI Taxonomy" id="319795"/>
    <lineage>
        <taxon>Bacteria</taxon>
        <taxon>Thermotogati</taxon>
        <taxon>Deinococcota</taxon>
        <taxon>Deinococci</taxon>
        <taxon>Deinococcales</taxon>
        <taxon>Deinococcaceae</taxon>
        <taxon>Deinococcus</taxon>
    </lineage>
</organism>
<reference key="1">
    <citation type="submission" date="2006-04" db="EMBL/GenBank/DDBJ databases">
        <title>Complete sequence of chromosome of Deinococcus geothermalis DSM 11300.</title>
        <authorList>
            <person name="Copeland A."/>
            <person name="Lucas S."/>
            <person name="Lapidus A."/>
            <person name="Barry K."/>
            <person name="Detter J.C."/>
            <person name="Glavina del Rio T."/>
            <person name="Hammon N."/>
            <person name="Israni S."/>
            <person name="Dalin E."/>
            <person name="Tice H."/>
            <person name="Pitluck S."/>
            <person name="Brettin T."/>
            <person name="Bruce D."/>
            <person name="Han C."/>
            <person name="Tapia R."/>
            <person name="Saunders E."/>
            <person name="Gilna P."/>
            <person name="Schmutz J."/>
            <person name="Larimer F."/>
            <person name="Land M."/>
            <person name="Hauser L."/>
            <person name="Kyrpides N."/>
            <person name="Kim E."/>
            <person name="Daly M.J."/>
            <person name="Fredrickson J.K."/>
            <person name="Makarova K.S."/>
            <person name="Gaidamakova E.K."/>
            <person name="Zhai M."/>
            <person name="Richardson P."/>
        </authorList>
    </citation>
    <scope>NUCLEOTIDE SEQUENCE [LARGE SCALE GENOMIC DNA]</scope>
    <source>
        <strain>DSM 11300 / CIP 105573 / AG-3a</strain>
    </source>
</reference>
<feature type="chain" id="PRO_0000267865" description="Large ribosomal subunit protein bL17">
    <location>
        <begin position="1"/>
        <end position="116"/>
    </location>
</feature>
<name>RL17_DEIGD</name>
<dbReference type="EMBL" id="CP000359">
    <property type="protein sequence ID" value="ABF46134.1"/>
    <property type="molecule type" value="Genomic_DNA"/>
</dbReference>
<dbReference type="RefSeq" id="WP_011530964.1">
    <property type="nucleotide sequence ID" value="NC_008025.1"/>
</dbReference>
<dbReference type="SMR" id="Q1IXA0"/>
<dbReference type="STRING" id="319795.Dgeo_1839"/>
<dbReference type="KEGG" id="dge:Dgeo_1839"/>
<dbReference type="eggNOG" id="COG0203">
    <property type="taxonomic scope" value="Bacteria"/>
</dbReference>
<dbReference type="HOGENOM" id="CLU_074407_2_0_0"/>
<dbReference type="Proteomes" id="UP000002431">
    <property type="component" value="Chromosome"/>
</dbReference>
<dbReference type="GO" id="GO:0022625">
    <property type="term" value="C:cytosolic large ribosomal subunit"/>
    <property type="evidence" value="ECO:0007669"/>
    <property type="project" value="TreeGrafter"/>
</dbReference>
<dbReference type="GO" id="GO:0003735">
    <property type="term" value="F:structural constituent of ribosome"/>
    <property type="evidence" value="ECO:0007669"/>
    <property type="project" value="InterPro"/>
</dbReference>
<dbReference type="GO" id="GO:0006412">
    <property type="term" value="P:translation"/>
    <property type="evidence" value="ECO:0007669"/>
    <property type="project" value="UniProtKB-UniRule"/>
</dbReference>
<dbReference type="FunFam" id="3.90.1030.10:FF:000013">
    <property type="entry name" value="50S ribosomal protein L17"/>
    <property type="match status" value="1"/>
</dbReference>
<dbReference type="Gene3D" id="3.90.1030.10">
    <property type="entry name" value="Ribosomal protein L17"/>
    <property type="match status" value="1"/>
</dbReference>
<dbReference type="HAMAP" id="MF_01368">
    <property type="entry name" value="Ribosomal_bL17"/>
    <property type="match status" value="1"/>
</dbReference>
<dbReference type="InterPro" id="IPR000456">
    <property type="entry name" value="Ribosomal_bL17"/>
</dbReference>
<dbReference type="InterPro" id="IPR047859">
    <property type="entry name" value="Ribosomal_bL17_CS"/>
</dbReference>
<dbReference type="InterPro" id="IPR036373">
    <property type="entry name" value="Ribosomal_bL17_sf"/>
</dbReference>
<dbReference type="NCBIfam" id="TIGR00059">
    <property type="entry name" value="L17"/>
    <property type="match status" value="1"/>
</dbReference>
<dbReference type="PANTHER" id="PTHR14413:SF16">
    <property type="entry name" value="LARGE RIBOSOMAL SUBUNIT PROTEIN BL17M"/>
    <property type="match status" value="1"/>
</dbReference>
<dbReference type="PANTHER" id="PTHR14413">
    <property type="entry name" value="RIBOSOMAL PROTEIN L17"/>
    <property type="match status" value="1"/>
</dbReference>
<dbReference type="Pfam" id="PF01196">
    <property type="entry name" value="Ribosomal_L17"/>
    <property type="match status" value="1"/>
</dbReference>
<dbReference type="SUPFAM" id="SSF64263">
    <property type="entry name" value="Prokaryotic ribosomal protein L17"/>
    <property type="match status" value="1"/>
</dbReference>
<dbReference type="PROSITE" id="PS01167">
    <property type="entry name" value="RIBOSOMAL_L17"/>
    <property type="match status" value="1"/>
</dbReference>
<keyword id="KW-0687">Ribonucleoprotein</keyword>
<keyword id="KW-0689">Ribosomal protein</keyword>
<accession>Q1IXA0</accession>
<comment type="subunit">
    <text evidence="1">Part of the 50S ribosomal subunit. Contacts protein L32.</text>
</comment>
<comment type="similarity">
    <text evidence="1">Belongs to the bacterial ribosomal protein bL17 family.</text>
</comment>
<gene>
    <name evidence="1" type="primary">rplQ</name>
    <name type="ordered locus">Dgeo_1839</name>
</gene>
<sequence length="116" mass="12999">MRHGKAGRKLNRNSSARVALARAQATALLREGRIQTTLTKAKELRPYVEKLITTAKGGDLHARRLIARDIHDKDVVRKVMNEVAPRYAERQGGYTRILRVGTRRGDGVTMALIELV</sequence>
<proteinExistence type="inferred from homology"/>
<evidence type="ECO:0000255" key="1">
    <source>
        <dbReference type="HAMAP-Rule" id="MF_01368"/>
    </source>
</evidence>
<evidence type="ECO:0000305" key="2"/>
<protein>
    <recommendedName>
        <fullName evidence="1">Large ribosomal subunit protein bL17</fullName>
    </recommendedName>
    <alternativeName>
        <fullName evidence="2">50S ribosomal protein L17</fullName>
    </alternativeName>
</protein>